<sequence>MNMALISLAIDYKKSPIEVRSEFALSGLDVSMLYRSILAIDNVVHAVILSTCNRTEVYLEISNLRVVDDILVWWQGYVRNPNYKIKDYFKLRQGTEVIMHLMKLACGLESMVLGEPQILGQVKDSYTLSKKNHAIGKELDRVFQKVFATAKRVRSETRIGYCPVSVAFSAITLAKRQLDNISSKNVLIIGAGQTGELLFRHVTALAPKQIMLANRTIEKAQKITSVFRNASAHYLSELPQLIKKADIIIAAVNVLEYIVTCKYVGDKPRVFIDISIPQALDPKLGELEQNVYYCVDDINAVIEDNKDKRKYESSKAQKIIVKSLEEYLEKEKAIISNSAIKELFQKADGLVDLSLEKSLAKIRNGKDAEEIIKRFAYEIKKKVLHYPVVGMKEASKQGRSDCLVCMKRMFGLNVEK</sequence>
<accession>Q0BKE7</accession>
<comment type="function">
    <text evidence="1">Catalyzes the NADPH-dependent reduction of glutamyl-tRNA(Glu) to glutamate 1-semialdehyde (GSA).</text>
</comment>
<comment type="catalytic activity">
    <reaction evidence="1">
        <text>(S)-4-amino-5-oxopentanoate + tRNA(Glu) + NADP(+) = L-glutamyl-tRNA(Glu) + NADPH + H(+)</text>
        <dbReference type="Rhea" id="RHEA:12344"/>
        <dbReference type="Rhea" id="RHEA-COMP:9663"/>
        <dbReference type="Rhea" id="RHEA-COMP:9680"/>
        <dbReference type="ChEBI" id="CHEBI:15378"/>
        <dbReference type="ChEBI" id="CHEBI:57501"/>
        <dbReference type="ChEBI" id="CHEBI:57783"/>
        <dbReference type="ChEBI" id="CHEBI:58349"/>
        <dbReference type="ChEBI" id="CHEBI:78442"/>
        <dbReference type="ChEBI" id="CHEBI:78520"/>
        <dbReference type="EC" id="1.2.1.70"/>
    </reaction>
</comment>
<comment type="pathway">
    <text evidence="1">Porphyrin-containing compound metabolism; protoporphyrin-IX biosynthesis; 5-aminolevulinate from L-glutamyl-tRNA(Glu): step 1/2.</text>
</comment>
<comment type="subunit">
    <text evidence="1">Homodimer.</text>
</comment>
<comment type="domain">
    <text evidence="1">Possesses an unusual extended V-shaped dimeric structure with each monomer consisting of three distinct domains arranged along a curved 'spinal' alpha-helix. The N-terminal catalytic domain specifically recognizes the glutamate moiety of the substrate. The second domain is the NADPH-binding domain, and the third C-terminal domain is responsible for dimerization.</text>
</comment>
<comment type="miscellaneous">
    <text evidence="1">During catalysis, the active site Cys acts as a nucleophile attacking the alpha-carbonyl group of tRNA-bound glutamate with the formation of a thioester intermediate between enzyme and glutamate, and the concomitant release of tRNA(Glu). The thioester intermediate is finally reduced by direct hydride transfer from NADPH, to form the product GSA.</text>
</comment>
<comment type="similarity">
    <text evidence="1">Belongs to the glutamyl-tRNA reductase family.</text>
</comment>
<organism>
    <name type="scientific">Francisella tularensis subsp. holarctica (strain OSU18)</name>
    <dbReference type="NCBI Taxonomy" id="393011"/>
    <lineage>
        <taxon>Bacteria</taxon>
        <taxon>Pseudomonadati</taxon>
        <taxon>Pseudomonadota</taxon>
        <taxon>Gammaproteobacteria</taxon>
        <taxon>Thiotrichales</taxon>
        <taxon>Francisellaceae</taxon>
        <taxon>Francisella</taxon>
    </lineage>
</organism>
<protein>
    <recommendedName>
        <fullName evidence="1">Glutamyl-tRNA reductase</fullName>
        <shortName evidence="1">GluTR</shortName>
        <ecNumber evidence="1">1.2.1.70</ecNumber>
    </recommendedName>
</protein>
<proteinExistence type="inferred from homology"/>
<evidence type="ECO:0000255" key="1">
    <source>
        <dbReference type="HAMAP-Rule" id="MF_00087"/>
    </source>
</evidence>
<reference key="1">
    <citation type="journal article" date="2006" name="J. Bacteriol.">
        <title>Chromosome rearrangement and diversification of Francisella tularensis revealed by the type B (OSU18) genome sequence.</title>
        <authorList>
            <person name="Petrosino J.F."/>
            <person name="Xiang Q."/>
            <person name="Karpathy S.E."/>
            <person name="Jiang H."/>
            <person name="Yerrapragada S."/>
            <person name="Liu Y."/>
            <person name="Gioia J."/>
            <person name="Hemphill L."/>
            <person name="Gonzalez A."/>
            <person name="Raghavan T.M."/>
            <person name="Uzman A."/>
            <person name="Fox G.E."/>
            <person name="Highlander S."/>
            <person name="Reichard M."/>
            <person name="Morton R.J."/>
            <person name="Clinkenbeard K.D."/>
            <person name="Weinstock G.M."/>
        </authorList>
    </citation>
    <scope>NUCLEOTIDE SEQUENCE [LARGE SCALE GENOMIC DNA]</scope>
    <source>
        <strain>OSU18</strain>
    </source>
</reference>
<dbReference type="EC" id="1.2.1.70" evidence="1"/>
<dbReference type="EMBL" id="CP000437">
    <property type="protein sequence ID" value="ABI83437.1"/>
    <property type="molecule type" value="Genomic_DNA"/>
</dbReference>
<dbReference type="SMR" id="Q0BKE7"/>
<dbReference type="KEGG" id="fth:FTH_1661"/>
<dbReference type="UniPathway" id="UPA00251">
    <property type="reaction ID" value="UER00316"/>
</dbReference>
<dbReference type="GO" id="GO:0008883">
    <property type="term" value="F:glutamyl-tRNA reductase activity"/>
    <property type="evidence" value="ECO:0007669"/>
    <property type="project" value="UniProtKB-UniRule"/>
</dbReference>
<dbReference type="GO" id="GO:0050661">
    <property type="term" value="F:NADP binding"/>
    <property type="evidence" value="ECO:0007669"/>
    <property type="project" value="InterPro"/>
</dbReference>
<dbReference type="GO" id="GO:0019353">
    <property type="term" value="P:protoporphyrinogen IX biosynthetic process from glutamate"/>
    <property type="evidence" value="ECO:0007669"/>
    <property type="project" value="TreeGrafter"/>
</dbReference>
<dbReference type="CDD" id="cd05213">
    <property type="entry name" value="NAD_bind_Glutamyl_tRNA_reduct"/>
    <property type="match status" value="1"/>
</dbReference>
<dbReference type="FunFam" id="3.30.460.30:FF:000001">
    <property type="entry name" value="Glutamyl-tRNA reductase"/>
    <property type="match status" value="1"/>
</dbReference>
<dbReference type="Gene3D" id="3.30.460.30">
    <property type="entry name" value="Glutamyl-tRNA reductase, N-terminal domain"/>
    <property type="match status" value="1"/>
</dbReference>
<dbReference type="Gene3D" id="3.40.50.720">
    <property type="entry name" value="NAD(P)-binding Rossmann-like Domain"/>
    <property type="match status" value="1"/>
</dbReference>
<dbReference type="HAMAP" id="MF_00087">
    <property type="entry name" value="Glu_tRNA_reductase"/>
    <property type="match status" value="1"/>
</dbReference>
<dbReference type="InterPro" id="IPR000343">
    <property type="entry name" value="4pyrrol_synth_GluRdtase"/>
</dbReference>
<dbReference type="InterPro" id="IPR015896">
    <property type="entry name" value="4pyrrol_synth_GluRdtase_dimer"/>
</dbReference>
<dbReference type="InterPro" id="IPR015895">
    <property type="entry name" value="4pyrrol_synth_GluRdtase_N"/>
</dbReference>
<dbReference type="InterPro" id="IPR018214">
    <property type="entry name" value="GluRdtase_CS"/>
</dbReference>
<dbReference type="InterPro" id="IPR036453">
    <property type="entry name" value="GluRdtase_dimer_dom_sf"/>
</dbReference>
<dbReference type="InterPro" id="IPR036343">
    <property type="entry name" value="GluRdtase_N_sf"/>
</dbReference>
<dbReference type="InterPro" id="IPR036291">
    <property type="entry name" value="NAD(P)-bd_dom_sf"/>
</dbReference>
<dbReference type="InterPro" id="IPR006151">
    <property type="entry name" value="Shikm_DH/Glu-tRNA_Rdtase"/>
</dbReference>
<dbReference type="NCBIfam" id="TIGR01035">
    <property type="entry name" value="hemA"/>
    <property type="match status" value="1"/>
</dbReference>
<dbReference type="NCBIfam" id="NF010548">
    <property type="entry name" value="PRK13940.1"/>
    <property type="match status" value="1"/>
</dbReference>
<dbReference type="PANTHER" id="PTHR43013">
    <property type="entry name" value="GLUTAMYL-TRNA REDUCTASE"/>
    <property type="match status" value="1"/>
</dbReference>
<dbReference type="PANTHER" id="PTHR43013:SF1">
    <property type="entry name" value="GLUTAMYL-TRNA REDUCTASE"/>
    <property type="match status" value="1"/>
</dbReference>
<dbReference type="Pfam" id="PF00745">
    <property type="entry name" value="GlutR_dimer"/>
    <property type="match status" value="1"/>
</dbReference>
<dbReference type="Pfam" id="PF05201">
    <property type="entry name" value="GlutR_N"/>
    <property type="match status" value="1"/>
</dbReference>
<dbReference type="Pfam" id="PF01488">
    <property type="entry name" value="Shikimate_DH"/>
    <property type="match status" value="1"/>
</dbReference>
<dbReference type="PIRSF" id="PIRSF000445">
    <property type="entry name" value="4pyrrol_synth_GluRdtase"/>
    <property type="match status" value="1"/>
</dbReference>
<dbReference type="SUPFAM" id="SSF69742">
    <property type="entry name" value="Glutamyl tRNA-reductase catalytic, N-terminal domain"/>
    <property type="match status" value="1"/>
</dbReference>
<dbReference type="SUPFAM" id="SSF69075">
    <property type="entry name" value="Glutamyl tRNA-reductase dimerization domain"/>
    <property type="match status" value="1"/>
</dbReference>
<dbReference type="SUPFAM" id="SSF51735">
    <property type="entry name" value="NAD(P)-binding Rossmann-fold domains"/>
    <property type="match status" value="1"/>
</dbReference>
<dbReference type="PROSITE" id="PS00747">
    <property type="entry name" value="GLUTR"/>
    <property type="match status" value="1"/>
</dbReference>
<keyword id="KW-0521">NADP</keyword>
<keyword id="KW-0560">Oxidoreductase</keyword>
<keyword id="KW-0627">Porphyrin biosynthesis</keyword>
<name>HEM1_FRATO</name>
<gene>
    <name evidence="1" type="primary">hemA</name>
    <name type="ordered locus">FTH_1661</name>
</gene>
<feature type="chain" id="PRO_0000335035" description="Glutamyl-tRNA reductase">
    <location>
        <begin position="1"/>
        <end position="416"/>
    </location>
</feature>
<feature type="active site" description="Nucleophile" evidence="1">
    <location>
        <position position="52"/>
    </location>
</feature>
<feature type="binding site" evidence="1">
    <location>
        <begin position="51"/>
        <end position="54"/>
    </location>
    <ligand>
        <name>substrate</name>
    </ligand>
</feature>
<feature type="binding site" evidence="1">
    <location>
        <position position="110"/>
    </location>
    <ligand>
        <name>substrate</name>
    </ligand>
</feature>
<feature type="binding site" evidence="1">
    <location>
        <begin position="115"/>
        <end position="117"/>
    </location>
    <ligand>
        <name>substrate</name>
    </ligand>
</feature>
<feature type="binding site" evidence="1">
    <location>
        <position position="121"/>
    </location>
    <ligand>
        <name>substrate</name>
    </ligand>
</feature>
<feature type="binding site" evidence="1">
    <location>
        <begin position="190"/>
        <end position="195"/>
    </location>
    <ligand>
        <name>NADP(+)</name>
        <dbReference type="ChEBI" id="CHEBI:58349"/>
    </ligand>
</feature>
<feature type="site" description="Important for activity" evidence="1">
    <location>
        <position position="100"/>
    </location>
</feature>